<protein>
    <recommendedName>
        <fullName evidence="1">Histidine--tRNA ligase</fullName>
        <ecNumber evidence="1">6.1.1.21</ecNumber>
    </recommendedName>
    <alternativeName>
        <fullName evidence="1">Histidyl-tRNA synthetase</fullName>
        <shortName evidence="1">HisRS</shortName>
    </alternativeName>
</protein>
<feature type="chain" id="PRO_1000016488" description="Histidine--tRNA ligase">
    <location>
        <begin position="1"/>
        <end position="424"/>
    </location>
</feature>
<evidence type="ECO:0000255" key="1">
    <source>
        <dbReference type="HAMAP-Rule" id="MF_00127"/>
    </source>
</evidence>
<dbReference type="EC" id="6.1.1.21" evidence="1"/>
<dbReference type="EMBL" id="CP000305">
    <property type="protein sequence ID" value="ABG17590.1"/>
    <property type="molecule type" value="Genomic_DNA"/>
</dbReference>
<dbReference type="EMBL" id="ACNQ01000008">
    <property type="protein sequence ID" value="EEO77703.1"/>
    <property type="molecule type" value="Genomic_DNA"/>
</dbReference>
<dbReference type="RefSeq" id="WP_002209816.1">
    <property type="nucleotide sequence ID" value="NZ_ACNQ01000008.1"/>
</dbReference>
<dbReference type="SMR" id="Q1CK90"/>
<dbReference type="GeneID" id="57975836"/>
<dbReference type="KEGG" id="ypn:YPN_1260"/>
<dbReference type="HOGENOM" id="CLU_025113_1_1_6"/>
<dbReference type="Proteomes" id="UP000008936">
    <property type="component" value="Chromosome"/>
</dbReference>
<dbReference type="GO" id="GO:0005737">
    <property type="term" value="C:cytoplasm"/>
    <property type="evidence" value="ECO:0007669"/>
    <property type="project" value="UniProtKB-SubCell"/>
</dbReference>
<dbReference type="GO" id="GO:0005524">
    <property type="term" value="F:ATP binding"/>
    <property type="evidence" value="ECO:0007669"/>
    <property type="project" value="UniProtKB-UniRule"/>
</dbReference>
<dbReference type="GO" id="GO:0004821">
    <property type="term" value="F:histidine-tRNA ligase activity"/>
    <property type="evidence" value="ECO:0007669"/>
    <property type="project" value="UniProtKB-UniRule"/>
</dbReference>
<dbReference type="GO" id="GO:0006427">
    <property type="term" value="P:histidyl-tRNA aminoacylation"/>
    <property type="evidence" value="ECO:0007669"/>
    <property type="project" value="UniProtKB-UniRule"/>
</dbReference>
<dbReference type="CDD" id="cd00773">
    <property type="entry name" value="HisRS-like_core"/>
    <property type="match status" value="1"/>
</dbReference>
<dbReference type="CDD" id="cd00859">
    <property type="entry name" value="HisRS_anticodon"/>
    <property type="match status" value="1"/>
</dbReference>
<dbReference type="FunFam" id="3.30.930.10:FF:000005">
    <property type="entry name" value="Histidine--tRNA ligase"/>
    <property type="match status" value="1"/>
</dbReference>
<dbReference type="FunFam" id="3.40.50.800:FF:000007">
    <property type="entry name" value="Histidine--tRNA ligase"/>
    <property type="match status" value="1"/>
</dbReference>
<dbReference type="Gene3D" id="3.40.50.800">
    <property type="entry name" value="Anticodon-binding domain"/>
    <property type="match status" value="1"/>
</dbReference>
<dbReference type="Gene3D" id="3.30.930.10">
    <property type="entry name" value="Bira Bifunctional Protein, Domain 2"/>
    <property type="match status" value="1"/>
</dbReference>
<dbReference type="HAMAP" id="MF_00127">
    <property type="entry name" value="His_tRNA_synth"/>
    <property type="match status" value="1"/>
</dbReference>
<dbReference type="InterPro" id="IPR006195">
    <property type="entry name" value="aa-tRNA-synth_II"/>
</dbReference>
<dbReference type="InterPro" id="IPR045864">
    <property type="entry name" value="aa-tRNA-synth_II/BPL/LPL"/>
</dbReference>
<dbReference type="InterPro" id="IPR004154">
    <property type="entry name" value="Anticodon-bd"/>
</dbReference>
<dbReference type="InterPro" id="IPR036621">
    <property type="entry name" value="Anticodon-bd_dom_sf"/>
</dbReference>
<dbReference type="InterPro" id="IPR015807">
    <property type="entry name" value="His-tRNA-ligase"/>
</dbReference>
<dbReference type="InterPro" id="IPR041715">
    <property type="entry name" value="HisRS-like_core"/>
</dbReference>
<dbReference type="InterPro" id="IPR004516">
    <property type="entry name" value="HisRS/HisZ"/>
</dbReference>
<dbReference type="InterPro" id="IPR033656">
    <property type="entry name" value="HisRS_anticodon"/>
</dbReference>
<dbReference type="NCBIfam" id="TIGR00442">
    <property type="entry name" value="hisS"/>
    <property type="match status" value="1"/>
</dbReference>
<dbReference type="PANTHER" id="PTHR43707:SF1">
    <property type="entry name" value="HISTIDINE--TRNA LIGASE, MITOCHONDRIAL-RELATED"/>
    <property type="match status" value="1"/>
</dbReference>
<dbReference type="PANTHER" id="PTHR43707">
    <property type="entry name" value="HISTIDYL-TRNA SYNTHETASE"/>
    <property type="match status" value="1"/>
</dbReference>
<dbReference type="Pfam" id="PF03129">
    <property type="entry name" value="HGTP_anticodon"/>
    <property type="match status" value="1"/>
</dbReference>
<dbReference type="Pfam" id="PF13393">
    <property type="entry name" value="tRNA-synt_His"/>
    <property type="match status" value="1"/>
</dbReference>
<dbReference type="PIRSF" id="PIRSF001549">
    <property type="entry name" value="His-tRNA_synth"/>
    <property type="match status" value="1"/>
</dbReference>
<dbReference type="SUPFAM" id="SSF52954">
    <property type="entry name" value="Class II aaRS ABD-related"/>
    <property type="match status" value="1"/>
</dbReference>
<dbReference type="SUPFAM" id="SSF55681">
    <property type="entry name" value="Class II aaRS and biotin synthetases"/>
    <property type="match status" value="1"/>
</dbReference>
<dbReference type="PROSITE" id="PS50862">
    <property type="entry name" value="AA_TRNA_LIGASE_II"/>
    <property type="match status" value="1"/>
</dbReference>
<reference key="1">
    <citation type="journal article" date="2006" name="J. Bacteriol.">
        <title>Complete genome sequence of Yersinia pestis strains Antiqua and Nepal516: evidence of gene reduction in an emerging pathogen.</title>
        <authorList>
            <person name="Chain P.S.G."/>
            <person name="Hu P."/>
            <person name="Malfatti S.A."/>
            <person name="Radnedge L."/>
            <person name="Larimer F."/>
            <person name="Vergez L.M."/>
            <person name="Worsham P."/>
            <person name="Chu M.C."/>
            <person name="Andersen G.L."/>
        </authorList>
    </citation>
    <scope>NUCLEOTIDE SEQUENCE [LARGE SCALE GENOMIC DNA]</scope>
    <source>
        <strain>Nepal516</strain>
    </source>
</reference>
<reference key="2">
    <citation type="submission" date="2009-04" db="EMBL/GenBank/DDBJ databases">
        <title>Yersinia pestis Nepal516A whole genome shotgun sequencing project.</title>
        <authorList>
            <person name="Plunkett G. III"/>
            <person name="Anderson B.D."/>
            <person name="Baumler D.J."/>
            <person name="Burland V."/>
            <person name="Cabot E.L."/>
            <person name="Glasner J.D."/>
            <person name="Mau B."/>
            <person name="Neeno-Eckwall E."/>
            <person name="Perna N.T."/>
            <person name="Munk A.C."/>
            <person name="Tapia R."/>
            <person name="Green L.D."/>
            <person name="Rogers Y.C."/>
            <person name="Detter J.C."/>
            <person name="Bruce D.C."/>
            <person name="Brettin T.S."/>
        </authorList>
    </citation>
    <scope>NUCLEOTIDE SEQUENCE [LARGE SCALE GENOMIC DNA]</scope>
    <source>
        <strain>Nepal516</strain>
    </source>
</reference>
<gene>
    <name evidence="1" type="primary">hisS</name>
    <name type="ordered locus">YPN_1260</name>
    <name type="ORF">YP516_1383</name>
</gene>
<comment type="catalytic activity">
    <reaction evidence="1">
        <text>tRNA(His) + L-histidine + ATP = L-histidyl-tRNA(His) + AMP + diphosphate + H(+)</text>
        <dbReference type="Rhea" id="RHEA:17313"/>
        <dbReference type="Rhea" id="RHEA-COMP:9665"/>
        <dbReference type="Rhea" id="RHEA-COMP:9689"/>
        <dbReference type="ChEBI" id="CHEBI:15378"/>
        <dbReference type="ChEBI" id="CHEBI:30616"/>
        <dbReference type="ChEBI" id="CHEBI:33019"/>
        <dbReference type="ChEBI" id="CHEBI:57595"/>
        <dbReference type="ChEBI" id="CHEBI:78442"/>
        <dbReference type="ChEBI" id="CHEBI:78527"/>
        <dbReference type="ChEBI" id="CHEBI:456215"/>
        <dbReference type="EC" id="6.1.1.21"/>
    </reaction>
</comment>
<comment type="subunit">
    <text evidence="1">Homodimer.</text>
</comment>
<comment type="subcellular location">
    <subcellularLocation>
        <location evidence="1">Cytoplasm</location>
    </subcellularLocation>
</comment>
<comment type="similarity">
    <text evidence="1">Belongs to the class-II aminoacyl-tRNA synthetase family.</text>
</comment>
<organism>
    <name type="scientific">Yersinia pestis bv. Antiqua (strain Nepal516)</name>
    <dbReference type="NCBI Taxonomy" id="377628"/>
    <lineage>
        <taxon>Bacteria</taxon>
        <taxon>Pseudomonadati</taxon>
        <taxon>Pseudomonadota</taxon>
        <taxon>Gammaproteobacteria</taxon>
        <taxon>Enterobacterales</taxon>
        <taxon>Yersiniaceae</taxon>
        <taxon>Yersinia</taxon>
    </lineage>
</organism>
<sequence length="424" mass="47262">MAKNIQAIRGMNDYLPADTAIWQRIESILKQVLSGYGYSEIRMPIVEQTPLFKRAIGEVTDVVEKEMYTFDDRNGESLTLRPEGTAGCVRAGIEHGLLYNQEQRLWYIGPMFRYERPQKGRYRQFHQLGAEVFGLPGPDIDAELILLTARWWRALGIFEHVKLELNSIGSLAARADYREALVAFLEQHVEVLDEDCKRRMYSNPLRVLDSKNPDVQQLLDDAPKLSDYLDEESKQHFAGLCELLDKASIPYTVNERLVRGLDYYNRTVFEWVTHSLGAQGTVCAGGRYDGLVEQLGGRATPAVGFAMGLERLVLLVQAVNADFQVPATVDAYVISSGEGAQSAAMLLAESLRDALPTLKIMTNYGGGNVKKQFTRADKWGARVALMLGESEVAAQQVVVKDLRNGEQETLAQADVAARLALMLG</sequence>
<keyword id="KW-0030">Aminoacyl-tRNA synthetase</keyword>
<keyword id="KW-0067">ATP-binding</keyword>
<keyword id="KW-0963">Cytoplasm</keyword>
<keyword id="KW-0436">Ligase</keyword>
<keyword id="KW-0547">Nucleotide-binding</keyword>
<keyword id="KW-0648">Protein biosynthesis</keyword>
<proteinExistence type="inferred from homology"/>
<accession>Q1CK90</accession>
<accession>C4GRL2</accession>
<name>SYH_YERPN</name>